<keyword id="KW-0025">Alternative splicing</keyword>
<keyword id="KW-0130">Cell adhesion</keyword>
<keyword id="KW-0965">Cell junction</keyword>
<keyword id="KW-1003">Cell membrane</keyword>
<keyword id="KW-0175">Coiled coil</keyword>
<keyword id="KW-0963">Cytoplasm</keyword>
<keyword id="KW-0217">Developmental protein</keyword>
<keyword id="KW-0472">Membrane</keyword>
<keyword id="KW-0539">Nucleus</keyword>
<keyword id="KW-1185">Reference proteome</keyword>
<keyword id="KW-0677">Repeat</keyword>
<keyword id="KW-0804">Transcription</keyword>
<keyword id="KW-0805">Transcription regulation</keyword>
<keyword id="KW-0879">Wnt signaling pathway</keyword>
<comment type="function">
    <text evidence="5 7 8 9 10">Key regulator of cell-cell adhesion that associates with and regulates the cell adhesion properties of both C-, E- and N-cadherins, being critical for their surface stability. Beside cell-cell adhesion, regulates gene transcription through several transcription factors including ZBTB33/Kaiso2 and GLIS2, and the activity of Rho family GTPases and downstream cytoskeletal dynamics. Implicated both in cell transformation by SRC and in ligand-induced receptor signaling through the EGF, PDGF, CSF-1 and ERBB2 receptors. Required for gastrulation, axial elongation and development of the craniofacial skeleton and eye.</text>
</comment>
<comment type="subunit">
    <text evidence="5 6">Interacts with C-cadherin and with zbtb33.</text>
</comment>
<comment type="interaction">
    <interactant intactId="EBI-6260685">
        <id>Q8AXM9</id>
    </interactant>
    <interactant intactId="EBI-6259065">
        <id>Q8JJ48</id>
        <label>dact1-a</label>
    </interactant>
    <organismsDiffer>false</organismsDiffer>
    <experiments>6</experiments>
</comment>
<comment type="interaction">
    <interactant intactId="EBI-6260685">
        <id>Q8AXM9</id>
    </interactant>
    <interactant intactId="EBI-6257503">
        <id>P51142</id>
        <label>dvl2</label>
    </interactant>
    <organismsDiffer>false</organismsDiffer>
    <experiments>2</experiments>
</comment>
<comment type="interaction">
    <interactant intactId="EBI-6260685">
        <id>Q8AXM9</id>
    </interactant>
    <interactant intactId="EBI-6261609">
        <id>Q8UVQ4</id>
        <label>zbtb33</label>
    </interactant>
    <organismsDiffer>false</organismsDiffer>
    <experiments>2</experiments>
</comment>
<comment type="subcellular location">
    <subcellularLocation>
        <location evidence="2">Cell junction</location>
        <location evidence="2">Adherens junction</location>
    </subcellularLocation>
    <subcellularLocation>
        <location evidence="2">Cytoplasm</location>
    </subcellularLocation>
    <subcellularLocation>
        <location evidence="2">Nucleus</location>
    </subcellularLocation>
    <subcellularLocation>
        <location evidence="2">Cell membrane</location>
    </subcellularLocation>
</comment>
<comment type="alternative products">
    <event type="alternative splicing"/>
    <isoform>
        <id>Q8AXM9-1</id>
        <name>1</name>
        <sequence type="displayed"/>
    </isoform>
    <isoform>
        <id>Q8AXM9-2</id>
        <name>2</name>
        <sequence type="described" ref="VSP_016649"/>
    </isoform>
</comment>
<comment type="tissue specificity">
    <text evidence="8">Ubiquitously expressed.</text>
</comment>
<comment type="developmental stage">
    <text evidence="5 8">Expressed maternally and throughout early embryogenesis. Highly expressed in tissues participating in prominent morphogenetic movements. Enriched in the animal hemisphere in early gastrula and the anterior region in late neurula. Expressed in the head region in the tailbud stage, particularly the optic vesicle, ear vesicle, olfactory placode and branchial arches. Expression is also weakly elevated in the somites, notochord and pronephros.</text>
</comment>
<comment type="domain">
    <text evidence="1">ARM repeats 1 to 5 mediate interaction with cadherins.</text>
</comment>
<comment type="similarity">
    <text evidence="12">Belongs to the beta-catenin family.</text>
</comment>
<evidence type="ECO:0000250" key="1"/>
<evidence type="ECO:0000250" key="2">
    <source>
        <dbReference type="UniProtKB" id="O60716"/>
    </source>
</evidence>
<evidence type="ECO:0000255" key="3"/>
<evidence type="ECO:0000256" key="4">
    <source>
        <dbReference type="SAM" id="MobiDB-lite"/>
    </source>
</evidence>
<evidence type="ECO:0000269" key="5">
    <source>
    </source>
</evidence>
<evidence type="ECO:0000269" key="6">
    <source>
    </source>
</evidence>
<evidence type="ECO:0000269" key="7">
    <source>
    </source>
</evidence>
<evidence type="ECO:0000269" key="8">
    <source>
    </source>
</evidence>
<evidence type="ECO:0000269" key="9">
    <source>
    </source>
</evidence>
<evidence type="ECO:0000269" key="10">
    <source>
    </source>
</evidence>
<evidence type="ECO:0000303" key="11">
    <source>
    </source>
</evidence>
<evidence type="ECO:0000305" key="12"/>
<organism>
    <name type="scientific">Xenopus laevis</name>
    <name type="common">African clawed frog</name>
    <dbReference type="NCBI Taxonomy" id="8355"/>
    <lineage>
        <taxon>Eukaryota</taxon>
        <taxon>Metazoa</taxon>
        <taxon>Chordata</taxon>
        <taxon>Craniata</taxon>
        <taxon>Vertebrata</taxon>
        <taxon>Euteleostomi</taxon>
        <taxon>Amphibia</taxon>
        <taxon>Batrachia</taxon>
        <taxon>Anura</taxon>
        <taxon>Pipoidea</taxon>
        <taxon>Pipidae</taxon>
        <taxon>Xenopodinae</taxon>
        <taxon>Xenopus</taxon>
        <taxon>Xenopus</taxon>
    </lineage>
</organism>
<name>CTND1_XENLA</name>
<sequence length="859" mass="94561">MDEPESESPASILASVRAQEAQFELLSRALEEERRHVTAQLDRVWVTPQEPPLANGSLTRRQQDGLPFLYTPTRMEAHSVHADERYVIDDSSYKSCTLTDESRCSEIPIQTVVGYSQTLDRPYREAAGSGGAYTTVPRNYHFRGPGVDSTMPLISQSPHPGYSSLSRPNQRYRSVDPFRGPGYGPQPQVRGGGLGGSQSDLLSGRIYGSEDAYGLEDDRRSLGGFIDGPDYATTGRRGANGGDPRRRLRSYEDPLSDHFGSIPTSGSLSSLGPAPLTLAPNSGPWRHPELPEVLAMLSYTLDAVRLNAAAYLQHLSYRNEDVKREVCRLRGIPPLISLLEDPRAPIRLAACGALKNLSYGPARENKMAVKNCDGVPALARLLRRRGEGIEGRELAECVTGTLWNLSSLDSVKMELVDQALYTLTQEILVPHSGWQQDGGMQDRVEGKPRHVEWEPALVNTTGCLRNISSERSEARRKMRECEGLVDSVVHILRSEVSHGLVDSKLLENVVCLLRNISYHVHREIPHAEKYMESPQNASAETQNPSCFGVRRGKGKKASEEAVDTVDFPKQTMPAQGYDLLFQPEIVRLYISLVKSSHTPAVLEASAGAIQNLCAGNWVYGRCIRAAVRQEKGLSSLADHLTHESERVVRAICGALRNLCGDNRNRELIGKHALNSLVARLSSSSAQSSALSEDTNVCVINTIHEVISGNLEAAKRLRESQGIERLVLINKGGGRSEREIRAAGFCLQTIWGYKELRRPLEKDGWKKSDFQVSTAATSSVQGYDDSTLPLIDRNLKNEKKSVNADIPLNDFIADQFTHNGDSSNRLPTRSDELSELDPLKECSVSAGGSLNLGDAEDQRV</sequence>
<proteinExistence type="evidence at protein level"/>
<dbReference type="EMBL" id="AF150743">
    <property type="protein sequence ID" value="AAO13693.1"/>
    <property type="molecule type" value="mRNA"/>
</dbReference>
<dbReference type="EMBL" id="AF150744">
    <property type="protein sequence ID" value="AAO13694.1"/>
    <property type="molecule type" value="mRNA"/>
</dbReference>
<dbReference type="RefSeq" id="NP_001082468.1">
    <molecule id="Q8AXM9-1"/>
    <property type="nucleotide sequence ID" value="NM_001088999.2"/>
</dbReference>
<dbReference type="SMR" id="Q8AXM9"/>
<dbReference type="BioGRID" id="99822">
    <property type="interactions" value="1"/>
</dbReference>
<dbReference type="IntAct" id="Q8AXM9">
    <property type="interactions" value="3"/>
</dbReference>
<dbReference type="GeneID" id="398490"/>
<dbReference type="KEGG" id="xla:398490"/>
<dbReference type="AGR" id="Xenbase:XB-GENE-919837"/>
<dbReference type="CTD" id="398490"/>
<dbReference type="Xenbase" id="XB-GENE-919837">
    <property type="gene designation" value="ctnnd1.L"/>
</dbReference>
<dbReference type="OrthoDB" id="3245100at2759"/>
<dbReference type="Proteomes" id="UP000186698">
    <property type="component" value="Chromosome 7L"/>
</dbReference>
<dbReference type="Bgee" id="398490">
    <property type="expression patterns" value="Expressed in egg cell and 19 other cell types or tissues"/>
</dbReference>
<dbReference type="GO" id="GO:0005912">
    <property type="term" value="C:adherens junction"/>
    <property type="evidence" value="ECO:0000318"/>
    <property type="project" value="GO_Central"/>
</dbReference>
<dbReference type="GO" id="GO:0005911">
    <property type="term" value="C:cell-cell junction"/>
    <property type="evidence" value="ECO:0000250"/>
    <property type="project" value="UniProtKB"/>
</dbReference>
<dbReference type="GO" id="GO:0005737">
    <property type="term" value="C:cytoplasm"/>
    <property type="evidence" value="ECO:0000318"/>
    <property type="project" value="GO_Central"/>
</dbReference>
<dbReference type="GO" id="GO:0005634">
    <property type="term" value="C:nucleus"/>
    <property type="evidence" value="ECO:0000318"/>
    <property type="project" value="GO_Central"/>
</dbReference>
<dbReference type="GO" id="GO:0005886">
    <property type="term" value="C:plasma membrane"/>
    <property type="evidence" value="ECO:0000318"/>
    <property type="project" value="GO_Central"/>
</dbReference>
<dbReference type="GO" id="GO:0045296">
    <property type="term" value="F:cadherin binding"/>
    <property type="evidence" value="ECO:0000318"/>
    <property type="project" value="GO_Central"/>
</dbReference>
<dbReference type="GO" id="GO:0098609">
    <property type="term" value="P:cell-cell adhesion"/>
    <property type="evidence" value="ECO:0000318"/>
    <property type="project" value="GO_Central"/>
</dbReference>
<dbReference type="GO" id="GO:1904888">
    <property type="term" value="P:cranial skeletal system development"/>
    <property type="evidence" value="ECO:0000315"/>
    <property type="project" value="Xenbase"/>
</dbReference>
<dbReference type="GO" id="GO:0016055">
    <property type="term" value="P:Wnt signaling pathway"/>
    <property type="evidence" value="ECO:0007669"/>
    <property type="project" value="UniProtKB-KW"/>
</dbReference>
<dbReference type="FunFam" id="1.25.10.10:FF:000007">
    <property type="entry name" value="ARVCF, delta catenin family member"/>
    <property type="match status" value="1"/>
</dbReference>
<dbReference type="Gene3D" id="1.25.10.10">
    <property type="entry name" value="Leucine-rich Repeat Variant"/>
    <property type="match status" value="1"/>
</dbReference>
<dbReference type="InterPro" id="IPR011989">
    <property type="entry name" value="ARM-like"/>
</dbReference>
<dbReference type="InterPro" id="IPR016024">
    <property type="entry name" value="ARM-type_fold"/>
</dbReference>
<dbReference type="InterPro" id="IPR000225">
    <property type="entry name" value="Armadillo"/>
</dbReference>
<dbReference type="InterPro" id="IPR028435">
    <property type="entry name" value="Plakophilin/d_Catenin"/>
</dbReference>
<dbReference type="PANTHER" id="PTHR10372:SF6">
    <property type="entry name" value="CATENIN DELTA-1"/>
    <property type="match status" value="1"/>
</dbReference>
<dbReference type="PANTHER" id="PTHR10372">
    <property type="entry name" value="PLAKOPHILLIN-RELATED"/>
    <property type="match status" value="1"/>
</dbReference>
<dbReference type="Pfam" id="PF00514">
    <property type="entry name" value="Arm"/>
    <property type="match status" value="2"/>
</dbReference>
<dbReference type="SMART" id="SM00185">
    <property type="entry name" value="ARM"/>
    <property type="match status" value="6"/>
</dbReference>
<dbReference type="SUPFAM" id="SSF48371">
    <property type="entry name" value="ARM repeat"/>
    <property type="match status" value="1"/>
</dbReference>
<dbReference type="PROSITE" id="PS50176">
    <property type="entry name" value="ARM_REPEAT"/>
    <property type="match status" value="3"/>
</dbReference>
<reference key="1">
    <citation type="journal article" date="2004" name="J. Cell Sci.">
        <title>p120 catenin is required for morphogenetic movements involved in the formation of the eyes and the craniofacial skeleton in Xenopus.</title>
        <authorList>
            <person name="Ciesiolka M."/>
            <person name="Delvaeye M."/>
            <person name="Van Imschoot G."/>
            <person name="Verschuere V."/>
            <person name="McCrea P."/>
            <person name="van Roy F."/>
            <person name="Vleminckx K."/>
        </authorList>
    </citation>
    <scope>NUCLEOTIDE SEQUENCE [MRNA] (ISOFORMS 1 AND 2)</scope>
    <scope>FUNCTION</scope>
    <scope>TISSUE SPECIFICITY</scope>
    <scope>DEVELOPMENTAL STAGE</scope>
</reference>
<reference key="2">
    <citation type="journal article" date="1999" name="Dev. Biol.">
        <title>Misexpression of the catenin p120(ctn)1A perturbs Xenopus gastrulation but does not elicit Wnt-directed axis specification.</title>
        <authorList>
            <person name="Paulson A.F."/>
            <person name="Fang X."/>
            <person name="Ji H."/>
            <person name="Reynolds A.B."/>
            <person name="McCrea P.D."/>
        </authorList>
    </citation>
    <scope>FUNCTION</scope>
    <scope>INTERACTION WITH C-CADHERIN</scope>
    <scope>DEVELOPMENTAL STAGE</scope>
</reference>
<reference key="3">
    <citation type="journal article" date="2002" name="J. Biol. Chem.">
        <title>Isolation and characterization of XKaiso, a transcriptional repressor that associates with the catenin Xp120(ctn) in Xenopus laevis.</title>
        <authorList>
            <person name="Kim S.-W."/>
            <person name="Fang X."/>
            <person name="Ji H."/>
            <person name="Paulson A.F."/>
            <person name="Daniel J.M."/>
            <person name="Ciesiolka M."/>
            <person name="van Roy F."/>
            <person name="McCrea P.D."/>
        </authorList>
    </citation>
    <scope>INTERACTION WITH ZBTB33</scope>
</reference>
<reference key="4">
    <citation type="journal article" date="2004" name="J. Cell Biol.">
        <title>Vertebrate development requires ARVCF and p120 catenins and their interplay with RhoA and Rac.</title>
        <authorList>
            <person name="Fang X."/>
            <person name="Ji H."/>
            <person name="Kim S.-W."/>
            <person name="Park J.-I."/>
            <person name="Vaught T.G."/>
            <person name="Anastasiadis P.Z."/>
            <person name="Ciesiolka M."/>
            <person name="McCrea P.D."/>
        </authorList>
    </citation>
    <scope>FUNCTION</scope>
</reference>
<reference key="5">
    <citation type="journal article" date="2004" name="Nat. Cell Biol.">
        <title>Non-canonical Wnt signals are modulated by the Kaiso transcriptional repressor and p120-catenin.</title>
        <authorList>
            <person name="Kim S.-W."/>
            <person name="Park J.-I."/>
            <person name="Spring C.M."/>
            <person name="Sater A.K."/>
            <person name="Ji H."/>
            <person name="Otchere A.A."/>
            <person name="Daniel J.M."/>
            <person name="McCrea P.D."/>
        </authorList>
    </citation>
    <scope>FUNCTION</scope>
</reference>
<reference key="6">
    <citation type="journal article" date="2005" name="Dev. Cell">
        <title>Kaiso/p120-catenin and TCF/beta-catenin complexes coordinately regulate canonical Wnt gene targets.</title>
        <authorList>
            <person name="Park J.-I."/>
            <person name="Kim S.-W."/>
            <person name="Lyons J.P."/>
            <person name="Ji H."/>
            <person name="Nguyen T.T."/>
            <person name="Cho K."/>
            <person name="Barton M.C."/>
            <person name="Deroo T."/>
            <person name="Vleminckx K."/>
            <person name="Moon R.T."/>
            <person name="McCrea P.D."/>
        </authorList>
    </citation>
    <scope>FUNCTION</scope>
</reference>
<gene>
    <name type="primary">ctnnd1</name>
</gene>
<accession>Q8AXM9</accession>
<accession>Q8AXN0</accession>
<feature type="chain" id="PRO_0000064298" description="Catenin delta-1">
    <location>
        <begin position="1"/>
        <end position="859"/>
    </location>
</feature>
<feature type="repeat" description="ARM 1">
    <location>
        <begin position="279"/>
        <end position="317"/>
    </location>
</feature>
<feature type="repeat" description="ARM 2">
    <location>
        <begin position="320"/>
        <end position="359"/>
    </location>
</feature>
<feature type="repeat" description="ARM 3">
    <location>
        <begin position="363"/>
        <end position="401"/>
    </location>
</feature>
<feature type="repeat" description="ARM 4">
    <location>
        <begin position="402"/>
        <end position="446"/>
    </location>
</feature>
<feature type="repeat" description="ARM 5">
    <location>
        <begin position="464"/>
        <end position="503"/>
    </location>
</feature>
<feature type="repeat" description="ARM 6">
    <location>
        <begin position="513"/>
        <end position="552"/>
    </location>
</feature>
<feature type="repeat" description="ARM 7">
    <location>
        <begin position="574"/>
        <end position="614"/>
    </location>
</feature>
<feature type="repeat" description="ARM 8">
    <location>
        <begin position="621"/>
        <end position="660"/>
    </location>
</feature>
<feature type="repeat" description="ARM 9">
    <location>
        <begin position="661"/>
        <end position="700"/>
    </location>
</feature>
<feature type="repeat" description="ARM 10">
    <location>
        <begin position="701"/>
        <end position="746"/>
    </location>
</feature>
<feature type="region of interest" description="Disordered" evidence="4">
    <location>
        <begin position="226"/>
        <end position="254"/>
    </location>
</feature>
<feature type="coiled-coil region" evidence="3">
    <location>
        <begin position="15"/>
        <end position="44"/>
    </location>
</feature>
<feature type="compositionally biased region" description="Basic and acidic residues" evidence="4">
    <location>
        <begin position="243"/>
        <end position="254"/>
    </location>
</feature>
<feature type="splice variant" id="VSP_016649" description="In isoform 2." evidence="11">
    <location>
        <begin position="1"/>
        <end position="74"/>
    </location>
</feature>
<protein>
    <recommendedName>
        <fullName>Catenin delta-1</fullName>
    </recommendedName>
    <alternativeName>
        <fullName>Xp120(ctn)</fullName>
    </alternativeName>
    <alternativeName>
        <fullName>p120 catenin</fullName>
        <shortName>p120(ctn)</shortName>
    </alternativeName>
</protein>